<gene>
    <name evidence="1" type="primary">argB</name>
    <name type="ordered locus">VP2758</name>
</gene>
<evidence type="ECO:0000255" key="1">
    <source>
        <dbReference type="HAMAP-Rule" id="MF_00082"/>
    </source>
</evidence>
<feature type="chain" id="PRO_0000112681" description="Acetylglutamate kinase">
    <location>
        <begin position="1"/>
        <end position="263"/>
    </location>
</feature>
<feature type="binding site" evidence="1">
    <location>
        <begin position="48"/>
        <end position="49"/>
    </location>
    <ligand>
        <name>substrate</name>
    </ligand>
</feature>
<feature type="binding site" evidence="1">
    <location>
        <position position="70"/>
    </location>
    <ligand>
        <name>substrate</name>
    </ligand>
</feature>
<feature type="binding site" evidence="1">
    <location>
        <position position="162"/>
    </location>
    <ligand>
        <name>substrate</name>
    </ligand>
</feature>
<feature type="site" description="Transition state stabilizer" evidence="1">
    <location>
        <position position="12"/>
    </location>
</feature>
<feature type="site" description="Transition state stabilizer" evidence="1">
    <location>
        <position position="221"/>
    </location>
</feature>
<comment type="function">
    <text evidence="1">Catalyzes the ATP-dependent phosphorylation of N-acetyl-L-glutamate.</text>
</comment>
<comment type="catalytic activity">
    <reaction evidence="1">
        <text>N-acetyl-L-glutamate + ATP = N-acetyl-L-glutamyl 5-phosphate + ADP</text>
        <dbReference type="Rhea" id="RHEA:14629"/>
        <dbReference type="ChEBI" id="CHEBI:30616"/>
        <dbReference type="ChEBI" id="CHEBI:44337"/>
        <dbReference type="ChEBI" id="CHEBI:57936"/>
        <dbReference type="ChEBI" id="CHEBI:456216"/>
        <dbReference type="EC" id="2.7.2.8"/>
    </reaction>
</comment>
<comment type="pathway">
    <text evidence="1">Amino-acid biosynthesis; L-arginine biosynthesis; N(2)-acetyl-L-ornithine from L-glutamate: step 2/4.</text>
</comment>
<comment type="subcellular location">
    <subcellularLocation>
        <location evidence="1">Cytoplasm</location>
    </subcellularLocation>
</comment>
<comment type="similarity">
    <text evidence="1">Belongs to the acetylglutamate kinase family. ArgB subfamily.</text>
</comment>
<sequence length="263" mass="27106">MTQTNQAPLVIKLGGAALSCTQTLSQLFGAIAAYQKSAQRQIAIVHGGGYLVDELMAKLQLKTVKKHGLRVTPYDQIPVIAGALAGTANKLLQGQAIADGLNAVGLSLADGGLCHVEELDPELGAVGKATPGDSSLLQAILNTGALPIISSIGLTAEGQMMNVNADQAAVAVAGALDAELVLLSDVSGVLDGKGHLLKSLSKKEANALIEGQVITDGMIVKVKAALEAANDLGRPIEVATWRYPEKLTQLFAGESIGTQFLPQ</sequence>
<organism>
    <name type="scientific">Vibrio parahaemolyticus serotype O3:K6 (strain RIMD 2210633)</name>
    <dbReference type="NCBI Taxonomy" id="223926"/>
    <lineage>
        <taxon>Bacteria</taxon>
        <taxon>Pseudomonadati</taxon>
        <taxon>Pseudomonadota</taxon>
        <taxon>Gammaproteobacteria</taxon>
        <taxon>Vibrionales</taxon>
        <taxon>Vibrionaceae</taxon>
        <taxon>Vibrio</taxon>
    </lineage>
</organism>
<name>ARGB_VIBPA</name>
<keyword id="KW-0028">Amino-acid biosynthesis</keyword>
<keyword id="KW-0055">Arginine biosynthesis</keyword>
<keyword id="KW-0067">ATP-binding</keyword>
<keyword id="KW-0963">Cytoplasm</keyword>
<keyword id="KW-0418">Kinase</keyword>
<keyword id="KW-0547">Nucleotide-binding</keyword>
<keyword id="KW-0808">Transferase</keyword>
<reference key="1">
    <citation type="journal article" date="2003" name="Lancet">
        <title>Genome sequence of Vibrio parahaemolyticus: a pathogenic mechanism distinct from that of V. cholerae.</title>
        <authorList>
            <person name="Makino K."/>
            <person name="Oshima K."/>
            <person name="Kurokawa K."/>
            <person name="Yokoyama K."/>
            <person name="Uda T."/>
            <person name="Tagomori K."/>
            <person name="Iijima Y."/>
            <person name="Najima M."/>
            <person name="Nakano M."/>
            <person name="Yamashita A."/>
            <person name="Kubota Y."/>
            <person name="Kimura S."/>
            <person name="Yasunaga T."/>
            <person name="Honda T."/>
            <person name="Shinagawa H."/>
            <person name="Hattori M."/>
            <person name="Iida T."/>
        </authorList>
    </citation>
    <scope>NUCLEOTIDE SEQUENCE [LARGE SCALE GENOMIC DNA]</scope>
    <source>
        <strain>RIMD 2210633</strain>
    </source>
</reference>
<proteinExistence type="inferred from homology"/>
<protein>
    <recommendedName>
        <fullName evidence="1">Acetylglutamate kinase</fullName>
        <ecNumber evidence="1">2.7.2.8</ecNumber>
    </recommendedName>
    <alternativeName>
        <fullName evidence="1">N-acetyl-L-glutamate 5-phosphotransferase</fullName>
    </alternativeName>
    <alternativeName>
        <fullName evidence="1">NAG kinase</fullName>
        <shortName evidence="1">NAGK</shortName>
    </alternativeName>
</protein>
<dbReference type="EC" id="2.7.2.8" evidence="1"/>
<dbReference type="EMBL" id="BA000031">
    <property type="protein sequence ID" value="BAC61021.1"/>
    <property type="molecule type" value="Genomic_DNA"/>
</dbReference>
<dbReference type="RefSeq" id="NP_799137.1">
    <property type="nucleotide sequence ID" value="NC_004603.1"/>
</dbReference>
<dbReference type="RefSeq" id="WP_005480488.1">
    <property type="nucleotide sequence ID" value="NC_004603.1"/>
</dbReference>
<dbReference type="SMR" id="Q87L56"/>
<dbReference type="GeneID" id="1190308"/>
<dbReference type="KEGG" id="vpa:VP2758"/>
<dbReference type="PATRIC" id="fig|223926.6.peg.2654"/>
<dbReference type="eggNOG" id="COG0548">
    <property type="taxonomic scope" value="Bacteria"/>
</dbReference>
<dbReference type="HOGENOM" id="CLU_053680_1_1_6"/>
<dbReference type="UniPathway" id="UPA00068">
    <property type="reaction ID" value="UER00107"/>
</dbReference>
<dbReference type="Proteomes" id="UP000002493">
    <property type="component" value="Chromosome 1"/>
</dbReference>
<dbReference type="GO" id="GO:0005737">
    <property type="term" value="C:cytoplasm"/>
    <property type="evidence" value="ECO:0007669"/>
    <property type="project" value="UniProtKB-SubCell"/>
</dbReference>
<dbReference type="GO" id="GO:0003991">
    <property type="term" value="F:acetylglutamate kinase activity"/>
    <property type="evidence" value="ECO:0007669"/>
    <property type="project" value="UniProtKB-UniRule"/>
</dbReference>
<dbReference type="GO" id="GO:0005524">
    <property type="term" value="F:ATP binding"/>
    <property type="evidence" value="ECO:0007669"/>
    <property type="project" value="UniProtKB-UniRule"/>
</dbReference>
<dbReference type="GO" id="GO:0042450">
    <property type="term" value="P:arginine biosynthetic process via ornithine"/>
    <property type="evidence" value="ECO:0007669"/>
    <property type="project" value="UniProtKB-UniRule"/>
</dbReference>
<dbReference type="GO" id="GO:0006526">
    <property type="term" value="P:L-arginine biosynthetic process"/>
    <property type="evidence" value="ECO:0007669"/>
    <property type="project" value="UniProtKB-UniPathway"/>
</dbReference>
<dbReference type="CDD" id="cd04249">
    <property type="entry name" value="AAK_NAGK-NC"/>
    <property type="match status" value="1"/>
</dbReference>
<dbReference type="Gene3D" id="3.40.1160.10">
    <property type="entry name" value="Acetylglutamate kinase-like"/>
    <property type="match status" value="1"/>
</dbReference>
<dbReference type="HAMAP" id="MF_00082">
    <property type="entry name" value="ArgB"/>
    <property type="match status" value="1"/>
</dbReference>
<dbReference type="InterPro" id="IPR036393">
    <property type="entry name" value="AceGlu_kinase-like_sf"/>
</dbReference>
<dbReference type="InterPro" id="IPR004662">
    <property type="entry name" value="AcgluKinase_fam"/>
</dbReference>
<dbReference type="InterPro" id="IPR037528">
    <property type="entry name" value="ArgB"/>
</dbReference>
<dbReference type="InterPro" id="IPR001048">
    <property type="entry name" value="Asp/Glu/Uridylate_kinase"/>
</dbReference>
<dbReference type="InterPro" id="IPR041731">
    <property type="entry name" value="NAGK-NC"/>
</dbReference>
<dbReference type="NCBIfam" id="TIGR00761">
    <property type="entry name" value="argB"/>
    <property type="match status" value="1"/>
</dbReference>
<dbReference type="PANTHER" id="PTHR23342">
    <property type="entry name" value="N-ACETYLGLUTAMATE SYNTHASE"/>
    <property type="match status" value="1"/>
</dbReference>
<dbReference type="PANTHER" id="PTHR23342:SF0">
    <property type="entry name" value="N-ACETYLGLUTAMATE SYNTHASE, MITOCHONDRIAL"/>
    <property type="match status" value="1"/>
</dbReference>
<dbReference type="Pfam" id="PF00696">
    <property type="entry name" value="AA_kinase"/>
    <property type="match status" value="1"/>
</dbReference>
<dbReference type="PIRSF" id="PIRSF000728">
    <property type="entry name" value="NAGK"/>
    <property type="match status" value="1"/>
</dbReference>
<dbReference type="SUPFAM" id="SSF53633">
    <property type="entry name" value="Carbamate kinase-like"/>
    <property type="match status" value="1"/>
</dbReference>
<accession>Q87L56</accession>